<protein>
    <recommendedName>
        <fullName evidence="1">Putative NADH dehydrogenase/NAD(P)H nitroreductase Smal_0358</fullName>
        <ecNumber evidence="1">1.-.-.-</ecNumber>
    </recommendedName>
</protein>
<proteinExistence type="inferred from homology"/>
<dbReference type="EC" id="1.-.-.-" evidence="1"/>
<dbReference type="EMBL" id="CP001111">
    <property type="protein sequence ID" value="ACF50063.1"/>
    <property type="molecule type" value="Genomic_DNA"/>
</dbReference>
<dbReference type="RefSeq" id="WP_012509870.1">
    <property type="nucleotide sequence ID" value="NC_011071.1"/>
</dbReference>
<dbReference type="SMR" id="B4SHM0"/>
<dbReference type="STRING" id="391008.Smal_0358"/>
<dbReference type="KEGG" id="smt:Smal_0358"/>
<dbReference type="eggNOG" id="COG0778">
    <property type="taxonomic scope" value="Bacteria"/>
</dbReference>
<dbReference type="HOGENOM" id="CLU_084441_0_0_6"/>
<dbReference type="OrthoDB" id="9784375at2"/>
<dbReference type="Proteomes" id="UP000001867">
    <property type="component" value="Chromosome"/>
</dbReference>
<dbReference type="GO" id="GO:0016491">
    <property type="term" value="F:oxidoreductase activity"/>
    <property type="evidence" value="ECO:0007669"/>
    <property type="project" value="UniProtKB-UniRule"/>
</dbReference>
<dbReference type="CDD" id="cd02148">
    <property type="entry name" value="RutE-like"/>
    <property type="match status" value="1"/>
</dbReference>
<dbReference type="Gene3D" id="3.40.109.10">
    <property type="entry name" value="NADH Oxidase"/>
    <property type="match status" value="1"/>
</dbReference>
<dbReference type="HAMAP" id="MF_01204">
    <property type="entry name" value="Oxidoreductase_RutE_HadB"/>
    <property type="match status" value="1"/>
</dbReference>
<dbReference type="InterPro" id="IPR029479">
    <property type="entry name" value="Nitroreductase"/>
</dbReference>
<dbReference type="InterPro" id="IPR000415">
    <property type="entry name" value="Nitroreductase-like"/>
</dbReference>
<dbReference type="InterPro" id="IPR050461">
    <property type="entry name" value="Nitroreductase_HadB/RutE"/>
</dbReference>
<dbReference type="InterPro" id="IPR023936">
    <property type="entry name" value="RutE-like"/>
</dbReference>
<dbReference type="NCBIfam" id="NF003768">
    <property type="entry name" value="PRK05365.1"/>
    <property type="match status" value="1"/>
</dbReference>
<dbReference type="PANTHER" id="PTHR43543">
    <property type="entry name" value="MALONIC SEMIALDEHYDE REDUCTASE RUTE-RELATED"/>
    <property type="match status" value="1"/>
</dbReference>
<dbReference type="PANTHER" id="PTHR43543:SF1">
    <property type="entry name" value="MALONIC SEMIALDEHYDE REDUCTASE RUTE-RELATED"/>
    <property type="match status" value="1"/>
</dbReference>
<dbReference type="Pfam" id="PF00881">
    <property type="entry name" value="Nitroreductase"/>
    <property type="match status" value="1"/>
</dbReference>
<dbReference type="SUPFAM" id="SSF55469">
    <property type="entry name" value="FMN-dependent nitroreductase-like"/>
    <property type="match status" value="1"/>
</dbReference>
<accession>B4SHM0</accession>
<feature type="chain" id="PRO_1000138703" description="Putative NADH dehydrogenase/NAD(P)H nitroreductase Smal_0358">
    <location>
        <begin position="1"/>
        <end position="196"/>
    </location>
</feature>
<keyword id="KW-0285">Flavoprotein</keyword>
<keyword id="KW-0288">FMN</keyword>
<keyword id="KW-0520">NAD</keyword>
<keyword id="KW-0521">NADP</keyword>
<keyword id="KW-0560">Oxidoreductase</keyword>
<evidence type="ECO:0000255" key="1">
    <source>
        <dbReference type="HAMAP-Rule" id="MF_01204"/>
    </source>
</evidence>
<reference key="1">
    <citation type="submission" date="2008-06" db="EMBL/GenBank/DDBJ databases">
        <title>Complete sequence of Stenotrophomonas maltophilia R551-3.</title>
        <authorList>
            <consortium name="US DOE Joint Genome Institute"/>
            <person name="Lucas S."/>
            <person name="Copeland A."/>
            <person name="Lapidus A."/>
            <person name="Glavina del Rio T."/>
            <person name="Dalin E."/>
            <person name="Tice H."/>
            <person name="Pitluck S."/>
            <person name="Chain P."/>
            <person name="Malfatti S."/>
            <person name="Shin M."/>
            <person name="Vergez L."/>
            <person name="Lang D."/>
            <person name="Schmutz J."/>
            <person name="Larimer F."/>
            <person name="Land M."/>
            <person name="Hauser L."/>
            <person name="Kyrpides N."/>
            <person name="Mikhailova N."/>
            <person name="Taghavi S."/>
            <person name="Monchy S."/>
            <person name="Newman L."/>
            <person name="Vangronsveld J."/>
            <person name="van der Lelie D."/>
            <person name="Richardson P."/>
        </authorList>
    </citation>
    <scope>NUCLEOTIDE SEQUENCE [LARGE SCALE GENOMIC DNA]</scope>
    <source>
        <strain>R551-3</strain>
    </source>
</reference>
<comment type="cofactor">
    <cofactor evidence="1">
        <name>FMN</name>
        <dbReference type="ChEBI" id="CHEBI:58210"/>
    </cofactor>
</comment>
<comment type="similarity">
    <text evidence="1">Belongs to the nitroreductase family. HadB/RutE subfamily.</text>
</comment>
<sequence length="196" mass="21092">MSHALDAAALDQLFRTARTQNGFLDKPVPASLLQELYDLVKWGPTAANTTPARFVFVTSKEAKAKLAPALSEGNHDKTMAAPVTVIIGFDLDFHEKLPYLFPHTDAKAWFDGPQEGRHEAAIRNGSLQGAYLILAARALGLDAGPMSGFDAAKVDEAFFAGTSIKSNFLVNLGYGDSAGLFPRLPRLSFDEAARIA</sequence>
<name>Y358_STRM5</name>
<gene>
    <name type="ordered locus">Smal_0358</name>
</gene>
<organism>
    <name type="scientific">Stenotrophomonas maltophilia (strain R551-3)</name>
    <dbReference type="NCBI Taxonomy" id="391008"/>
    <lineage>
        <taxon>Bacteria</taxon>
        <taxon>Pseudomonadati</taxon>
        <taxon>Pseudomonadota</taxon>
        <taxon>Gammaproteobacteria</taxon>
        <taxon>Lysobacterales</taxon>
        <taxon>Lysobacteraceae</taxon>
        <taxon>Stenotrophomonas</taxon>
        <taxon>Stenotrophomonas maltophilia group</taxon>
    </lineage>
</organism>